<gene>
    <name type="primary">Diras2</name>
</gene>
<organism>
    <name type="scientific">Mus musculus</name>
    <name type="common">Mouse</name>
    <dbReference type="NCBI Taxonomy" id="10090"/>
    <lineage>
        <taxon>Eukaryota</taxon>
        <taxon>Metazoa</taxon>
        <taxon>Chordata</taxon>
        <taxon>Craniata</taxon>
        <taxon>Vertebrata</taxon>
        <taxon>Euteleostomi</taxon>
        <taxon>Mammalia</taxon>
        <taxon>Eutheria</taxon>
        <taxon>Euarchontoglires</taxon>
        <taxon>Glires</taxon>
        <taxon>Rodentia</taxon>
        <taxon>Myomorpha</taxon>
        <taxon>Muroidea</taxon>
        <taxon>Muridae</taxon>
        <taxon>Murinae</taxon>
        <taxon>Mus</taxon>
        <taxon>Mus</taxon>
    </lineage>
</organism>
<comment type="function">
    <text evidence="1">Displays low GTPase activity and exists predominantly in the GTP-bound form.</text>
</comment>
<comment type="catalytic activity">
    <reaction evidence="1">
        <text>GTP + H2O = GDP + phosphate + H(+)</text>
        <dbReference type="Rhea" id="RHEA:19669"/>
        <dbReference type="ChEBI" id="CHEBI:15377"/>
        <dbReference type="ChEBI" id="CHEBI:15378"/>
        <dbReference type="ChEBI" id="CHEBI:37565"/>
        <dbReference type="ChEBI" id="CHEBI:43474"/>
        <dbReference type="ChEBI" id="CHEBI:58189"/>
    </reaction>
</comment>
<comment type="subcellular location">
    <subcellularLocation>
        <location evidence="1">Cell membrane</location>
        <topology evidence="1">Lipid-anchor</topology>
        <orientation evidence="1">Cytoplasmic side</orientation>
    </subcellularLocation>
</comment>
<comment type="PTM">
    <text evidence="1">Ubiquitinated by the ECS(ASB11) complex via 'Lys-11'-linked ubiquitin chains, leading to its degradation by the proteasome.</text>
</comment>
<comment type="similarity">
    <text evidence="3">Belongs to the small GTPase superfamily. Di-Ras family.</text>
</comment>
<proteinExistence type="evidence at protein level"/>
<protein>
    <recommendedName>
        <fullName>GTP-binding protein Di-Ras2</fullName>
        <ecNumber evidence="1">3.6.5.-</ecNumber>
    </recommendedName>
    <alternativeName>
        <fullName>Distinct subgroup of the Ras family member 2</fullName>
    </alternativeName>
</protein>
<accession>Q5PR73</accession>
<dbReference type="EC" id="3.6.5.-" evidence="1"/>
<dbReference type="EMBL" id="BC086799">
    <property type="protein sequence ID" value="AAH86799.1"/>
    <property type="molecule type" value="mRNA"/>
</dbReference>
<dbReference type="CCDS" id="CCDS26516.1"/>
<dbReference type="RefSeq" id="NP_001019645.1">
    <property type="nucleotide sequence ID" value="NM_001024474.2"/>
</dbReference>
<dbReference type="RefSeq" id="XP_006517013.1">
    <property type="nucleotide sequence ID" value="XM_006516950.4"/>
</dbReference>
<dbReference type="SMR" id="Q5PR73"/>
<dbReference type="BioGRID" id="212726">
    <property type="interactions" value="14"/>
</dbReference>
<dbReference type="FunCoup" id="Q5PR73">
    <property type="interactions" value="1023"/>
</dbReference>
<dbReference type="IntAct" id="Q5PR73">
    <property type="interactions" value="1"/>
</dbReference>
<dbReference type="STRING" id="10090.ENSMUSP00000055416"/>
<dbReference type="GlyGen" id="Q5PR73">
    <property type="glycosylation" value="1 site, 1 O-linked glycan (1 site)"/>
</dbReference>
<dbReference type="iPTMnet" id="Q5PR73"/>
<dbReference type="PhosphoSitePlus" id="Q5PR73"/>
<dbReference type="SwissPalm" id="Q5PR73"/>
<dbReference type="jPOST" id="Q5PR73"/>
<dbReference type="PaxDb" id="10090-ENSMUSP00000055416"/>
<dbReference type="ProteomicsDB" id="279692"/>
<dbReference type="Pumba" id="Q5PR73"/>
<dbReference type="Antibodypedia" id="28067">
    <property type="antibodies" value="140 antibodies from 22 providers"/>
</dbReference>
<dbReference type="DNASU" id="68203"/>
<dbReference type="Ensembl" id="ENSMUST00000057442.8">
    <property type="protein sequence ID" value="ENSMUSP00000055416.7"/>
    <property type="gene ID" value="ENSMUSG00000047842.8"/>
</dbReference>
<dbReference type="GeneID" id="68203"/>
<dbReference type="KEGG" id="mmu:68203"/>
<dbReference type="UCSC" id="uc007qmv.1">
    <property type="organism name" value="mouse"/>
</dbReference>
<dbReference type="AGR" id="MGI:1915453"/>
<dbReference type="CTD" id="54769"/>
<dbReference type="MGI" id="MGI:1915453">
    <property type="gene designation" value="Diras2"/>
</dbReference>
<dbReference type="VEuPathDB" id="HostDB:ENSMUSG00000047842"/>
<dbReference type="eggNOG" id="KOG0395">
    <property type="taxonomic scope" value="Eukaryota"/>
</dbReference>
<dbReference type="GeneTree" id="ENSGT00940000158196"/>
<dbReference type="HOGENOM" id="CLU_041217_9_8_1"/>
<dbReference type="InParanoid" id="Q5PR73"/>
<dbReference type="OMA" id="CKETNGA"/>
<dbReference type="OrthoDB" id="265044at2759"/>
<dbReference type="PhylomeDB" id="Q5PR73"/>
<dbReference type="TreeFam" id="TF313014"/>
<dbReference type="BioGRID-ORCS" id="68203">
    <property type="hits" value="1 hit in 76 CRISPR screens"/>
</dbReference>
<dbReference type="CD-CODE" id="CE726F99">
    <property type="entry name" value="Postsynaptic density"/>
</dbReference>
<dbReference type="ChiTaRS" id="Diras2">
    <property type="organism name" value="mouse"/>
</dbReference>
<dbReference type="PRO" id="PR:Q5PR73"/>
<dbReference type="Proteomes" id="UP000000589">
    <property type="component" value="Chromosome 13"/>
</dbReference>
<dbReference type="RNAct" id="Q5PR73">
    <property type="molecule type" value="protein"/>
</dbReference>
<dbReference type="Bgee" id="ENSMUSG00000047842">
    <property type="expression patterns" value="Expressed in cerebellar vermis and 174 other cell types or tissues"/>
</dbReference>
<dbReference type="ExpressionAtlas" id="Q5PR73">
    <property type="expression patterns" value="baseline and differential"/>
</dbReference>
<dbReference type="GO" id="GO:0005886">
    <property type="term" value="C:plasma membrane"/>
    <property type="evidence" value="ECO:0007669"/>
    <property type="project" value="UniProtKB-SubCell"/>
</dbReference>
<dbReference type="GO" id="GO:0005525">
    <property type="term" value="F:GTP binding"/>
    <property type="evidence" value="ECO:0007669"/>
    <property type="project" value="UniProtKB-KW"/>
</dbReference>
<dbReference type="GO" id="GO:0003924">
    <property type="term" value="F:GTPase activity"/>
    <property type="evidence" value="ECO:0007669"/>
    <property type="project" value="Ensembl"/>
</dbReference>
<dbReference type="GO" id="GO:0007165">
    <property type="term" value="P:signal transduction"/>
    <property type="evidence" value="ECO:0007669"/>
    <property type="project" value="InterPro"/>
</dbReference>
<dbReference type="CDD" id="cd04140">
    <property type="entry name" value="ARHI_like"/>
    <property type="match status" value="1"/>
</dbReference>
<dbReference type="FunFam" id="3.40.50.300:FF:000303">
    <property type="entry name" value="GTP-binding protein Di-Ras2"/>
    <property type="match status" value="1"/>
</dbReference>
<dbReference type="Gene3D" id="3.40.50.300">
    <property type="entry name" value="P-loop containing nucleotide triphosphate hydrolases"/>
    <property type="match status" value="1"/>
</dbReference>
<dbReference type="InterPro" id="IPR027417">
    <property type="entry name" value="P-loop_NTPase"/>
</dbReference>
<dbReference type="InterPro" id="IPR005225">
    <property type="entry name" value="Small_GTP-bd"/>
</dbReference>
<dbReference type="InterPro" id="IPR001806">
    <property type="entry name" value="Small_GTPase"/>
</dbReference>
<dbReference type="InterPro" id="IPR020849">
    <property type="entry name" value="Small_GTPase_Ras-type"/>
</dbReference>
<dbReference type="NCBIfam" id="TIGR00231">
    <property type="entry name" value="small_GTP"/>
    <property type="match status" value="1"/>
</dbReference>
<dbReference type="PANTHER" id="PTHR24070">
    <property type="entry name" value="RAS, DI-RAS, AND RHEB FAMILY MEMBERS OF SMALL GTPASE SUPERFAMILY"/>
    <property type="match status" value="1"/>
</dbReference>
<dbReference type="Pfam" id="PF00071">
    <property type="entry name" value="Ras"/>
    <property type="match status" value="1"/>
</dbReference>
<dbReference type="PRINTS" id="PR00449">
    <property type="entry name" value="RASTRNSFRMNG"/>
</dbReference>
<dbReference type="SMART" id="SM00175">
    <property type="entry name" value="RAB"/>
    <property type="match status" value="1"/>
</dbReference>
<dbReference type="SMART" id="SM00173">
    <property type="entry name" value="RAS"/>
    <property type="match status" value="1"/>
</dbReference>
<dbReference type="SMART" id="SM00174">
    <property type="entry name" value="RHO"/>
    <property type="match status" value="1"/>
</dbReference>
<dbReference type="SUPFAM" id="SSF52540">
    <property type="entry name" value="P-loop containing nucleoside triphosphate hydrolases"/>
    <property type="match status" value="1"/>
</dbReference>
<dbReference type="PROSITE" id="PS51421">
    <property type="entry name" value="RAS"/>
    <property type="match status" value="1"/>
</dbReference>
<evidence type="ECO:0000250" key="1">
    <source>
        <dbReference type="UniProtKB" id="Q96HU8"/>
    </source>
</evidence>
<evidence type="ECO:0000255" key="2"/>
<evidence type="ECO:0000305" key="3"/>
<evidence type="ECO:0007744" key="4">
    <source>
    </source>
</evidence>
<feature type="chain" id="PRO_0000191652" description="GTP-binding protein Di-Ras2">
    <location>
        <begin position="1"/>
        <end position="196"/>
    </location>
</feature>
<feature type="propeptide" id="PRO_0000370779" description="Removed in mature form" evidence="2">
    <location>
        <begin position="197"/>
        <end position="199"/>
    </location>
</feature>
<feature type="short sequence motif" description="Effector region" evidence="2">
    <location>
        <begin position="36"/>
        <end position="44"/>
    </location>
</feature>
<feature type="binding site" evidence="1">
    <location>
        <begin position="14"/>
        <end position="21"/>
    </location>
    <ligand>
        <name>GTP</name>
        <dbReference type="ChEBI" id="CHEBI:37565"/>
    </ligand>
</feature>
<feature type="binding site" evidence="1">
    <location>
        <begin position="33"/>
        <end position="39"/>
    </location>
    <ligand>
        <name>GTP</name>
        <dbReference type="ChEBI" id="CHEBI:37565"/>
    </ligand>
</feature>
<feature type="binding site" evidence="1">
    <location>
        <begin position="61"/>
        <end position="65"/>
    </location>
    <ligand>
        <name>GTP</name>
        <dbReference type="ChEBI" id="CHEBI:37565"/>
    </ligand>
</feature>
<feature type="binding site" evidence="1">
    <location>
        <begin position="121"/>
        <end position="124"/>
    </location>
    <ligand>
        <name>GTP</name>
        <dbReference type="ChEBI" id="CHEBI:37565"/>
    </ligand>
</feature>
<feature type="binding site" evidence="1">
    <location>
        <begin position="152"/>
        <end position="153"/>
    </location>
    <ligand>
        <name>GTP</name>
        <dbReference type="ChEBI" id="CHEBI:37565"/>
    </ligand>
</feature>
<feature type="modified residue" description="Phosphoserine" evidence="4">
    <location>
        <position position="35"/>
    </location>
</feature>
<feature type="modified residue" description="Phosphoserine" evidence="4">
    <location>
        <position position="126"/>
    </location>
</feature>
<feature type="modified residue" description="Cysteine methyl ester" evidence="3">
    <location>
        <position position="196"/>
    </location>
</feature>
<feature type="lipid moiety-binding region" description="S-geranylgeranyl cysteine" evidence="3">
    <location>
        <position position="196"/>
    </location>
</feature>
<keyword id="KW-1003">Cell membrane</keyword>
<keyword id="KW-0342">GTP-binding</keyword>
<keyword id="KW-0378">Hydrolase</keyword>
<keyword id="KW-0449">Lipoprotein</keyword>
<keyword id="KW-0472">Membrane</keyword>
<keyword id="KW-0488">Methylation</keyword>
<keyword id="KW-0547">Nucleotide-binding</keyword>
<keyword id="KW-0597">Phosphoprotein</keyword>
<keyword id="KW-0636">Prenylation</keyword>
<keyword id="KW-1185">Reference proteome</keyword>
<keyword id="KW-0832">Ubl conjugation</keyword>
<sequence length="199" mass="22498">MPEQSNDYRVAVFGAGGVGKSSLVLRFVKGTFRESYIPTVEDTYRQVISCDKSICTLQITDTTGSHQFPAMQRLSISKGHAFILVYSITSRQSLEELKPIYEQICEIKGDVESIPIMLVGNKCDESPNREVQSSEAEALARTWKCAFMETSAKLNHNVKELFQELLNLEKRRTVSLQIDGKKSKQQKRKEKLKGKCVVM</sequence>
<name>DIRA2_MOUSE</name>
<reference key="1">
    <citation type="journal article" date="2004" name="Genome Res.">
        <title>The status, quality, and expansion of the NIH full-length cDNA project: the Mammalian Gene Collection (MGC).</title>
        <authorList>
            <consortium name="The MGC Project Team"/>
        </authorList>
    </citation>
    <scope>NUCLEOTIDE SEQUENCE [LARGE SCALE MRNA]</scope>
    <source>
        <strain>C57BL/6J</strain>
        <tissue>Brain</tissue>
    </source>
</reference>
<reference key="2">
    <citation type="journal article" date="2010" name="Cell">
        <title>A tissue-specific atlas of mouse protein phosphorylation and expression.</title>
        <authorList>
            <person name="Huttlin E.L."/>
            <person name="Jedrychowski M.P."/>
            <person name="Elias J.E."/>
            <person name="Goswami T."/>
            <person name="Rad R."/>
            <person name="Beausoleil S.A."/>
            <person name="Villen J."/>
            <person name="Haas W."/>
            <person name="Sowa M.E."/>
            <person name="Gygi S.P."/>
        </authorList>
    </citation>
    <scope>PHOSPHORYLATION [LARGE SCALE ANALYSIS] AT SER-35 AND SER-126</scope>
    <scope>IDENTIFICATION BY MASS SPECTROMETRY [LARGE SCALE ANALYSIS]</scope>
    <source>
        <tissue>Brain</tissue>
    </source>
</reference>